<evidence type="ECO:0000255" key="1">
    <source>
        <dbReference type="HAMAP-Rule" id="MF_00167"/>
    </source>
</evidence>
<protein>
    <recommendedName>
        <fullName evidence="1">Translational regulator CsrA</fullName>
    </recommendedName>
</protein>
<proteinExistence type="inferred from homology"/>
<keyword id="KW-1005">Bacterial flagellum biogenesis</keyword>
<keyword id="KW-0963">Cytoplasm</keyword>
<keyword id="KW-1185">Reference proteome</keyword>
<keyword id="KW-0678">Repressor</keyword>
<keyword id="KW-0694">RNA-binding</keyword>
<keyword id="KW-0810">Translation regulation</keyword>
<sequence>MLVLSRKNNESIMLGKDIEIKILGIEDGKVKLGIEAPKDVEIYRKEIYLEIQEENKAASEQKQDWSQLKGLFTKK</sequence>
<name>CSRA_ALKMQ</name>
<reference key="1">
    <citation type="journal article" date="2016" name="Genome Announc.">
        <title>Complete genome sequence of Alkaliphilus metalliredigens strain QYMF, an alkaliphilic and metal-reducing bacterium isolated from borax-contaminated leachate ponds.</title>
        <authorList>
            <person name="Hwang C."/>
            <person name="Copeland A."/>
            <person name="Lucas S."/>
            <person name="Lapidus A."/>
            <person name="Barry K."/>
            <person name="Detter J.C."/>
            <person name="Glavina Del Rio T."/>
            <person name="Hammon N."/>
            <person name="Israni S."/>
            <person name="Dalin E."/>
            <person name="Tice H."/>
            <person name="Pitluck S."/>
            <person name="Chertkov O."/>
            <person name="Brettin T."/>
            <person name="Bruce D."/>
            <person name="Han C."/>
            <person name="Schmutz J."/>
            <person name="Larimer F."/>
            <person name="Land M.L."/>
            <person name="Hauser L."/>
            <person name="Kyrpides N."/>
            <person name="Mikhailova N."/>
            <person name="Ye Q."/>
            <person name="Zhou J."/>
            <person name="Richardson P."/>
            <person name="Fields M.W."/>
        </authorList>
    </citation>
    <scope>NUCLEOTIDE SEQUENCE [LARGE SCALE GENOMIC DNA]</scope>
    <source>
        <strain>QYMF</strain>
    </source>
</reference>
<comment type="function">
    <text evidence="1">A translational regulator that binds mRNA to regulate translation initiation and/or mRNA stability. Usually binds in the 5'-UTR at or near the Shine-Dalgarno sequence preventing ribosome-binding, thus repressing translation. Its main target seems to be the major flagellin gene, while its function is anatagonized by FliW.</text>
</comment>
<comment type="subunit">
    <text evidence="1">Homodimer; the beta-strands of each monomer intercalate to form a hydrophobic core, while the alpha-helices form wings that extend away from the core.</text>
</comment>
<comment type="subcellular location">
    <subcellularLocation>
        <location evidence="1">Cytoplasm</location>
    </subcellularLocation>
</comment>
<comment type="similarity">
    <text evidence="1">Belongs to the CsrA/RsmA family.</text>
</comment>
<dbReference type="EMBL" id="CP000724">
    <property type="protein sequence ID" value="ABR46956.1"/>
    <property type="molecule type" value="Genomic_DNA"/>
</dbReference>
<dbReference type="RefSeq" id="WP_012061999.1">
    <property type="nucleotide sequence ID" value="NC_009633.1"/>
</dbReference>
<dbReference type="SMR" id="A6TL88"/>
<dbReference type="STRING" id="293826.Amet_0731"/>
<dbReference type="KEGG" id="amt:Amet_0731"/>
<dbReference type="eggNOG" id="COG1551">
    <property type="taxonomic scope" value="Bacteria"/>
</dbReference>
<dbReference type="HOGENOM" id="CLU_164837_0_1_9"/>
<dbReference type="OrthoDB" id="9809061at2"/>
<dbReference type="Proteomes" id="UP000001572">
    <property type="component" value="Chromosome"/>
</dbReference>
<dbReference type="GO" id="GO:0005829">
    <property type="term" value="C:cytosol"/>
    <property type="evidence" value="ECO:0007669"/>
    <property type="project" value="TreeGrafter"/>
</dbReference>
<dbReference type="GO" id="GO:0048027">
    <property type="term" value="F:mRNA 5'-UTR binding"/>
    <property type="evidence" value="ECO:0007669"/>
    <property type="project" value="UniProtKB-UniRule"/>
</dbReference>
<dbReference type="GO" id="GO:0044781">
    <property type="term" value="P:bacterial-type flagellum organization"/>
    <property type="evidence" value="ECO:0007669"/>
    <property type="project" value="UniProtKB-KW"/>
</dbReference>
<dbReference type="GO" id="GO:0006402">
    <property type="term" value="P:mRNA catabolic process"/>
    <property type="evidence" value="ECO:0007669"/>
    <property type="project" value="InterPro"/>
</dbReference>
<dbReference type="GO" id="GO:0045947">
    <property type="term" value="P:negative regulation of translational initiation"/>
    <property type="evidence" value="ECO:0007669"/>
    <property type="project" value="UniProtKB-UniRule"/>
</dbReference>
<dbReference type="GO" id="GO:1902208">
    <property type="term" value="P:regulation of bacterial-type flagellum assembly"/>
    <property type="evidence" value="ECO:0007669"/>
    <property type="project" value="UniProtKB-UniRule"/>
</dbReference>
<dbReference type="GO" id="GO:0006109">
    <property type="term" value="P:regulation of carbohydrate metabolic process"/>
    <property type="evidence" value="ECO:0007669"/>
    <property type="project" value="InterPro"/>
</dbReference>
<dbReference type="FunFam" id="2.60.40.4380:FF:000002">
    <property type="entry name" value="Translational regulator CsrA"/>
    <property type="match status" value="1"/>
</dbReference>
<dbReference type="Gene3D" id="2.60.40.4380">
    <property type="entry name" value="Translational regulator CsrA"/>
    <property type="match status" value="1"/>
</dbReference>
<dbReference type="HAMAP" id="MF_00167">
    <property type="entry name" value="CsrA"/>
    <property type="match status" value="1"/>
</dbReference>
<dbReference type="InterPro" id="IPR003751">
    <property type="entry name" value="CsrA"/>
</dbReference>
<dbReference type="InterPro" id="IPR036107">
    <property type="entry name" value="CsrA_sf"/>
</dbReference>
<dbReference type="NCBIfam" id="TIGR00202">
    <property type="entry name" value="csrA"/>
    <property type="match status" value="1"/>
</dbReference>
<dbReference type="NCBIfam" id="NF002469">
    <property type="entry name" value="PRK01712.1"/>
    <property type="match status" value="1"/>
</dbReference>
<dbReference type="PANTHER" id="PTHR34984">
    <property type="entry name" value="CARBON STORAGE REGULATOR"/>
    <property type="match status" value="1"/>
</dbReference>
<dbReference type="PANTHER" id="PTHR34984:SF1">
    <property type="entry name" value="CARBON STORAGE REGULATOR"/>
    <property type="match status" value="1"/>
</dbReference>
<dbReference type="Pfam" id="PF02599">
    <property type="entry name" value="CsrA"/>
    <property type="match status" value="1"/>
</dbReference>
<dbReference type="SUPFAM" id="SSF117130">
    <property type="entry name" value="CsrA-like"/>
    <property type="match status" value="1"/>
</dbReference>
<feature type="chain" id="PRO_1000058265" description="Translational regulator CsrA">
    <location>
        <begin position="1"/>
        <end position="75"/>
    </location>
</feature>
<gene>
    <name evidence="1" type="primary">csrA</name>
    <name type="ordered locus">Amet_0731</name>
</gene>
<organism>
    <name type="scientific">Alkaliphilus metalliredigens (strain QYMF)</name>
    <dbReference type="NCBI Taxonomy" id="293826"/>
    <lineage>
        <taxon>Bacteria</taxon>
        <taxon>Bacillati</taxon>
        <taxon>Bacillota</taxon>
        <taxon>Clostridia</taxon>
        <taxon>Peptostreptococcales</taxon>
        <taxon>Natronincolaceae</taxon>
        <taxon>Alkaliphilus</taxon>
    </lineage>
</organism>
<accession>A6TL88</accession>